<gene>
    <name evidence="1" type="primary">thiQ</name>
    <name type="ordered locus">SFV_0058</name>
</gene>
<sequence length="232" mass="25051">MLKLTDITWLYHYLPMRFSLTVERGEQVAILGPSGAGKSTLLNLIAGFLTPASGSLTIDGVDHTTTPPSRRPVSMLFQENNLFSHLTVAQNIGLGLNPGLKLNAAQQEKMHAIARQMGIDNLMARLPGELSGGQRQRVALARCLVREQPILLLDEPFSALDPALRQEMLTLVSTSCQQQKMTLLMVSHSVEDAARIATRSVVVADGRIAWQGKTEELLSGKASASAILGITG</sequence>
<comment type="function">
    <text evidence="1">Part of the ABC transporter complex ThiBPQ involved in thiamine import. Responsible for energy coupling to the transport system.</text>
</comment>
<comment type="catalytic activity">
    <reaction evidence="1">
        <text>thiamine(out) + ATP + H2O = thiamine(in) + ADP + phosphate + H(+)</text>
        <dbReference type="Rhea" id="RHEA:29811"/>
        <dbReference type="ChEBI" id="CHEBI:15377"/>
        <dbReference type="ChEBI" id="CHEBI:15378"/>
        <dbReference type="ChEBI" id="CHEBI:18385"/>
        <dbReference type="ChEBI" id="CHEBI:30616"/>
        <dbReference type="ChEBI" id="CHEBI:43474"/>
        <dbReference type="ChEBI" id="CHEBI:456216"/>
        <dbReference type="EC" id="7.6.2.15"/>
    </reaction>
</comment>
<comment type="subunit">
    <text evidence="1">The complex is composed of two ATP-binding proteins (ThiQ), two transmembrane proteins (ThiP) and a solute-binding protein (ThiB).</text>
</comment>
<comment type="subcellular location">
    <subcellularLocation>
        <location evidence="1">Cell inner membrane</location>
        <topology evidence="1">Peripheral membrane protein</topology>
    </subcellularLocation>
</comment>
<comment type="similarity">
    <text evidence="1">Belongs to the ABC transporter superfamily. Thiamine importer (TC 3.A.1.19.1) family.</text>
</comment>
<proteinExistence type="inferred from homology"/>
<protein>
    <recommendedName>
        <fullName evidence="1">Thiamine import ATP-binding protein ThiQ</fullName>
        <ecNumber evidence="1">7.6.2.15</ecNumber>
    </recommendedName>
</protein>
<feature type="chain" id="PRO_0000274461" description="Thiamine import ATP-binding protein ThiQ">
    <location>
        <begin position="1"/>
        <end position="232"/>
    </location>
</feature>
<feature type="domain" description="ABC transporter" evidence="1">
    <location>
        <begin position="2"/>
        <end position="230"/>
    </location>
</feature>
<feature type="binding site" evidence="1">
    <location>
        <begin position="32"/>
        <end position="39"/>
    </location>
    <ligand>
        <name>ATP</name>
        <dbReference type="ChEBI" id="CHEBI:30616"/>
    </ligand>
</feature>
<reference key="1">
    <citation type="journal article" date="2006" name="BMC Genomics">
        <title>Complete genome sequence of Shigella flexneri 5b and comparison with Shigella flexneri 2a.</title>
        <authorList>
            <person name="Nie H."/>
            <person name="Yang F."/>
            <person name="Zhang X."/>
            <person name="Yang J."/>
            <person name="Chen L."/>
            <person name="Wang J."/>
            <person name="Xiong Z."/>
            <person name="Peng J."/>
            <person name="Sun L."/>
            <person name="Dong J."/>
            <person name="Xue Y."/>
            <person name="Xu X."/>
            <person name="Chen S."/>
            <person name="Yao Z."/>
            <person name="Shen Y."/>
            <person name="Jin Q."/>
        </authorList>
    </citation>
    <scope>NUCLEOTIDE SEQUENCE [LARGE SCALE GENOMIC DNA]</scope>
    <source>
        <strain>8401</strain>
    </source>
</reference>
<accession>Q0T8D1</accession>
<dbReference type="EC" id="7.6.2.15" evidence="1"/>
<dbReference type="EMBL" id="CP000266">
    <property type="protein sequence ID" value="ABF02345.1"/>
    <property type="molecule type" value="Genomic_DNA"/>
</dbReference>
<dbReference type="RefSeq" id="WP_000916320.1">
    <property type="nucleotide sequence ID" value="NC_008258.1"/>
</dbReference>
<dbReference type="SMR" id="Q0T8D1"/>
<dbReference type="KEGG" id="sfv:SFV_0058"/>
<dbReference type="HOGENOM" id="CLU_000604_1_22_6"/>
<dbReference type="Proteomes" id="UP000000659">
    <property type="component" value="Chromosome"/>
</dbReference>
<dbReference type="GO" id="GO:0005886">
    <property type="term" value="C:plasma membrane"/>
    <property type="evidence" value="ECO:0007669"/>
    <property type="project" value="UniProtKB-SubCell"/>
</dbReference>
<dbReference type="GO" id="GO:0048502">
    <property type="term" value="F:ABC-type thiamine transporter activity"/>
    <property type="evidence" value="ECO:0007669"/>
    <property type="project" value="UniProtKB-EC"/>
</dbReference>
<dbReference type="GO" id="GO:0005524">
    <property type="term" value="F:ATP binding"/>
    <property type="evidence" value="ECO:0007669"/>
    <property type="project" value="UniProtKB-KW"/>
</dbReference>
<dbReference type="GO" id="GO:0016887">
    <property type="term" value="F:ATP hydrolysis activity"/>
    <property type="evidence" value="ECO:0007669"/>
    <property type="project" value="InterPro"/>
</dbReference>
<dbReference type="CDD" id="cd03298">
    <property type="entry name" value="ABC_ThiQ_thiamine_transporter"/>
    <property type="match status" value="1"/>
</dbReference>
<dbReference type="FunFam" id="3.40.50.300:FF:001071">
    <property type="entry name" value="Thiamine import ATP-binding protein ThiQ"/>
    <property type="match status" value="1"/>
</dbReference>
<dbReference type="Gene3D" id="3.40.50.300">
    <property type="entry name" value="P-loop containing nucleotide triphosphate hydrolases"/>
    <property type="match status" value="1"/>
</dbReference>
<dbReference type="InterPro" id="IPR003593">
    <property type="entry name" value="AAA+_ATPase"/>
</dbReference>
<dbReference type="InterPro" id="IPR050093">
    <property type="entry name" value="ABC_SmlMolc_Importer"/>
</dbReference>
<dbReference type="InterPro" id="IPR003439">
    <property type="entry name" value="ABC_transporter-like_ATP-bd"/>
</dbReference>
<dbReference type="InterPro" id="IPR017871">
    <property type="entry name" value="ABC_transporter-like_CS"/>
</dbReference>
<dbReference type="InterPro" id="IPR027417">
    <property type="entry name" value="P-loop_NTPase"/>
</dbReference>
<dbReference type="InterPro" id="IPR005968">
    <property type="entry name" value="Thiamine_ABC_ThiQ"/>
</dbReference>
<dbReference type="NCBIfam" id="NF008039">
    <property type="entry name" value="PRK10771.1"/>
    <property type="match status" value="1"/>
</dbReference>
<dbReference type="NCBIfam" id="TIGR01277">
    <property type="entry name" value="thiQ"/>
    <property type="match status" value="1"/>
</dbReference>
<dbReference type="PANTHER" id="PTHR42781">
    <property type="entry name" value="SPERMIDINE/PUTRESCINE IMPORT ATP-BINDING PROTEIN POTA"/>
    <property type="match status" value="1"/>
</dbReference>
<dbReference type="PANTHER" id="PTHR42781:SF1">
    <property type="entry name" value="THIAMINE IMPORT ATP-BINDING PROTEIN THIQ"/>
    <property type="match status" value="1"/>
</dbReference>
<dbReference type="Pfam" id="PF00005">
    <property type="entry name" value="ABC_tran"/>
    <property type="match status" value="1"/>
</dbReference>
<dbReference type="SMART" id="SM00382">
    <property type="entry name" value="AAA"/>
    <property type="match status" value="1"/>
</dbReference>
<dbReference type="SUPFAM" id="SSF52540">
    <property type="entry name" value="P-loop containing nucleoside triphosphate hydrolases"/>
    <property type="match status" value="1"/>
</dbReference>
<dbReference type="PROSITE" id="PS00211">
    <property type="entry name" value="ABC_TRANSPORTER_1"/>
    <property type="match status" value="1"/>
</dbReference>
<dbReference type="PROSITE" id="PS50893">
    <property type="entry name" value="ABC_TRANSPORTER_2"/>
    <property type="match status" value="1"/>
</dbReference>
<dbReference type="PROSITE" id="PS51288">
    <property type="entry name" value="THIQ"/>
    <property type="match status" value="1"/>
</dbReference>
<keyword id="KW-0067">ATP-binding</keyword>
<keyword id="KW-0997">Cell inner membrane</keyword>
<keyword id="KW-1003">Cell membrane</keyword>
<keyword id="KW-0472">Membrane</keyword>
<keyword id="KW-0547">Nucleotide-binding</keyword>
<keyword id="KW-1278">Translocase</keyword>
<keyword id="KW-0813">Transport</keyword>
<name>THIQ_SHIF8</name>
<organism>
    <name type="scientific">Shigella flexneri serotype 5b (strain 8401)</name>
    <dbReference type="NCBI Taxonomy" id="373384"/>
    <lineage>
        <taxon>Bacteria</taxon>
        <taxon>Pseudomonadati</taxon>
        <taxon>Pseudomonadota</taxon>
        <taxon>Gammaproteobacteria</taxon>
        <taxon>Enterobacterales</taxon>
        <taxon>Enterobacteriaceae</taxon>
        <taxon>Shigella</taxon>
    </lineage>
</organism>
<evidence type="ECO:0000255" key="1">
    <source>
        <dbReference type="HAMAP-Rule" id="MF_01723"/>
    </source>
</evidence>